<gene>
    <name evidence="1" type="primary">mtnK</name>
    <name type="ordered locus">ESA_00811</name>
</gene>
<sequence length="399" mass="44372">MSQYRTFTASDAVAYAQQFGGLSAPEALVSAQEVGDGNLNLVFKIFDKQGISRIVVKQALPYVRCVGESWPLTLDRARLEAQTLVAHYQHCPAHTVKIHHYDPTLAVMVMEDLSDHRIWRGELIKGVHYPQAARQLGEYLAQTLFHTSDFYLHPHAKKAEVARFINPEMCEITEDLFFNDPYQVHERNNYPAELEADVAALRDDAALKCAVAALKHRFFSHAEALLHGDIHSGSIFVADGSLKAIDAEFGYFGPVGFDVGTAIGNLLLNYCGAPGQLGIREAADAREQRLIDIATLWHTFAERFQTLAREKTRDAALAEPGYASEFLKKVWADAIGFAGTELIRRSVGLSHVADIDTIRDEEMKLSCLRHAIGLGKALILLAPRIENADEFIARVRQYG</sequence>
<comment type="function">
    <text evidence="1">Catalyzes the phosphorylation of methylthioribose into methylthioribose-1-phosphate.</text>
</comment>
<comment type="catalytic activity">
    <reaction evidence="1">
        <text>5-(methylsulfanyl)-D-ribose + ATP = 5-(methylsulfanyl)-alpha-D-ribose 1-phosphate + ADP + H(+)</text>
        <dbReference type="Rhea" id="RHEA:22312"/>
        <dbReference type="ChEBI" id="CHEBI:15378"/>
        <dbReference type="ChEBI" id="CHEBI:30616"/>
        <dbReference type="ChEBI" id="CHEBI:58533"/>
        <dbReference type="ChEBI" id="CHEBI:78440"/>
        <dbReference type="ChEBI" id="CHEBI:456216"/>
        <dbReference type="EC" id="2.7.1.100"/>
    </reaction>
</comment>
<comment type="pathway">
    <text evidence="1">Amino-acid biosynthesis; L-methionine biosynthesis via salvage pathway; S-methyl-5-thio-alpha-D-ribose 1-phosphate from S-methyl-5'-thioadenosine (hydrolase route): step 2/2.</text>
</comment>
<comment type="subunit">
    <text evidence="1">Homodimer.</text>
</comment>
<comment type="similarity">
    <text evidence="1">Belongs to the methylthioribose kinase family.</text>
</comment>
<comment type="sequence caution" evidence="2">
    <conflict type="erroneous initiation">
        <sequence resource="EMBL-CDS" id="ABU76088"/>
    </conflict>
</comment>
<keyword id="KW-0028">Amino-acid biosynthesis</keyword>
<keyword id="KW-0067">ATP-binding</keyword>
<keyword id="KW-0418">Kinase</keyword>
<keyword id="KW-0486">Methionine biosynthesis</keyword>
<keyword id="KW-0547">Nucleotide-binding</keyword>
<keyword id="KW-1185">Reference proteome</keyword>
<keyword id="KW-0808">Transferase</keyword>
<evidence type="ECO:0000255" key="1">
    <source>
        <dbReference type="HAMAP-Rule" id="MF_01683"/>
    </source>
</evidence>
<evidence type="ECO:0000305" key="2"/>
<protein>
    <recommendedName>
        <fullName evidence="1">Methylthioribose kinase</fullName>
        <shortName evidence="1">MTR kinase</shortName>
        <ecNumber evidence="1">2.7.1.100</ecNumber>
    </recommendedName>
</protein>
<feature type="chain" id="PRO_0000357339" description="Methylthioribose kinase">
    <location>
        <begin position="1"/>
        <end position="399"/>
    </location>
</feature>
<feature type="binding site" evidence="1">
    <location>
        <position position="40"/>
    </location>
    <ligand>
        <name>ATP</name>
        <dbReference type="ChEBI" id="CHEBI:30616"/>
    </ligand>
</feature>
<feature type="binding site" evidence="1">
    <location>
        <position position="57"/>
    </location>
    <ligand>
        <name>ATP</name>
        <dbReference type="ChEBI" id="CHEBI:30616"/>
    </ligand>
</feature>
<feature type="binding site" evidence="1">
    <location>
        <begin position="111"/>
        <end position="113"/>
    </location>
    <ligand>
        <name>ATP</name>
        <dbReference type="ChEBI" id="CHEBI:30616"/>
    </ligand>
</feature>
<feature type="binding site" evidence="1">
    <location>
        <position position="229"/>
    </location>
    <ligand>
        <name>substrate</name>
    </ligand>
</feature>
<feature type="binding site" evidence="1">
    <location>
        <begin position="246"/>
        <end position="248"/>
    </location>
    <ligand>
        <name>ATP</name>
        <dbReference type="ChEBI" id="CHEBI:30616"/>
    </ligand>
</feature>
<feature type="binding site" evidence="1">
    <location>
        <position position="344"/>
    </location>
    <ligand>
        <name>substrate</name>
    </ligand>
</feature>
<reference key="1">
    <citation type="journal article" date="2010" name="PLoS ONE">
        <title>Genome sequence of Cronobacter sakazakii BAA-894 and comparative genomic hybridization analysis with other Cronobacter species.</title>
        <authorList>
            <person name="Kucerova E."/>
            <person name="Clifton S.W."/>
            <person name="Xia X.Q."/>
            <person name="Long F."/>
            <person name="Porwollik S."/>
            <person name="Fulton L."/>
            <person name="Fronick C."/>
            <person name="Minx P."/>
            <person name="Kyung K."/>
            <person name="Warren W."/>
            <person name="Fulton R."/>
            <person name="Feng D."/>
            <person name="Wollam A."/>
            <person name="Shah N."/>
            <person name="Bhonagiri V."/>
            <person name="Nash W.E."/>
            <person name="Hallsworth-Pepin K."/>
            <person name="Wilson R.K."/>
            <person name="McClelland M."/>
            <person name="Forsythe S.J."/>
        </authorList>
    </citation>
    <scope>NUCLEOTIDE SEQUENCE [LARGE SCALE GENOMIC DNA]</scope>
    <source>
        <strain>ATCC BAA-894</strain>
    </source>
</reference>
<organism>
    <name type="scientific">Cronobacter sakazakii (strain ATCC BAA-894)</name>
    <name type="common">Enterobacter sakazakii</name>
    <dbReference type="NCBI Taxonomy" id="290339"/>
    <lineage>
        <taxon>Bacteria</taxon>
        <taxon>Pseudomonadati</taxon>
        <taxon>Pseudomonadota</taxon>
        <taxon>Gammaproteobacteria</taxon>
        <taxon>Enterobacterales</taxon>
        <taxon>Enterobacteriaceae</taxon>
        <taxon>Cronobacter</taxon>
    </lineage>
</organism>
<accession>A7MKY0</accession>
<proteinExistence type="inferred from homology"/>
<dbReference type="EC" id="2.7.1.100" evidence="1"/>
<dbReference type="EMBL" id="CP000783">
    <property type="protein sequence ID" value="ABU76088.1"/>
    <property type="status" value="ALT_INIT"/>
    <property type="molecule type" value="Genomic_DNA"/>
</dbReference>
<dbReference type="RefSeq" id="WP_041460418.1">
    <property type="nucleotide sequence ID" value="NC_009778.1"/>
</dbReference>
<dbReference type="SMR" id="A7MKY0"/>
<dbReference type="KEGG" id="esa:ESA_00811"/>
<dbReference type="PATRIC" id="fig|290339.8.peg.721"/>
<dbReference type="HOGENOM" id="CLU_033681_0_0_6"/>
<dbReference type="UniPathway" id="UPA00904">
    <property type="reaction ID" value="UER00872"/>
</dbReference>
<dbReference type="Proteomes" id="UP000000260">
    <property type="component" value="Chromosome"/>
</dbReference>
<dbReference type="GO" id="GO:0005524">
    <property type="term" value="F:ATP binding"/>
    <property type="evidence" value="ECO:0007669"/>
    <property type="project" value="UniProtKB-UniRule"/>
</dbReference>
<dbReference type="GO" id="GO:0046522">
    <property type="term" value="F:S-methyl-5-thioribose kinase activity"/>
    <property type="evidence" value="ECO:0007669"/>
    <property type="project" value="UniProtKB-UniRule"/>
</dbReference>
<dbReference type="GO" id="GO:0019509">
    <property type="term" value="P:L-methionine salvage from methylthioadenosine"/>
    <property type="evidence" value="ECO:0007669"/>
    <property type="project" value="UniProtKB-UniRule"/>
</dbReference>
<dbReference type="Gene3D" id="3.90.1200.10">
    <property type="match status" value="1"/>
</dbReference>
<dbReference type="Gene3D" id="3.30.200.20">
    <property type="entry name" value="Phosphorylase Kinase, domain 1"/>
    <property type="match status" value="1"/>
</dbReference>
<dbReference type="HAMAP" id="MF_01683">
    <property type="entry name" value="Salvage_MtnK"/>
    <property type="match status" value="1"/>
</dbReference>
<dbReference type="InterPro" id="IPR002575">
    <property type="entry name" value="Aminoglycoside_PTrfase"/>
</dbReference>
<dbReference type="InterPro" id="IPR011009">
    <property type="entry name" value="Kinase-like_dom_sf"/>
</dbReference>
<dbReference type="InterPro" id="IPR009212">
    <property type="entry name" value="Methylthioribose_kinase"/>
</dbReference>
<dbReference type="NCBIfam" id="TIGR01767">
    <property type="entry name" value="MTRK"/>
    <property type="match status" value="1"/>
</dbReference>
<dbReference type="PANTHER" id="PTHR34273">
    <property type="entry name" value="METHYLTHIORIBOSE KINASE"/>
    <property type="match status" value="1"/>
</dbReference>
<dbReference type="PANTHER" id="PTHR34273:SF2">
    <property type="entry name" value="METHYLTHIORIBOSE KINASE"/>
    <property type="match status" value="1"/>
</dbReference>
<dbReference type="Pfam" id="PF01636">
    <property type="entry name" value="APH"/>
    <property type="match status" value="1"/>
</dbReference>
<dbReference type="PIRSF" id="PIRSF031134">
    <property type="entry name" value="MTRK"/>
    <property type="match status" value="1"/>
</dbReference>
<dbReference type="SUPFAM" id="SSF56112">
    <property type="entry name" value="Protein kinase-like (PK-like)"/>
    <property type="match status" value="1"/>
</dbReference>
<name>MTNK_CROS8</name>